<keyword id="KW-0007">Acetylation</keyword>
<keyword id="KW-0117">Actin capping</keyword>
<keyword id="KW-0009">Actin-binding</keyword>
<keyword id="KW-0024">Alternative initiation</keyword>
<keyword id="KW-0106">Calcium</keyword>
<keyword id="KW-0970">Cilium biogenesis/degradation</keyword>
<keyword id="KW-0963">Cytoplasm</keyword>
<keyword id="KW-0206">Cytoskeleton</keyword>
<keyword id="KW-0903">Direct protein sequencing</keyword>
<keyword id="KW-1015">Disulfide bond</keyword>
<keyword id="KW-0479">Metal-binding</keyword>
<keyword id="KW-0597">Phosphoprotein</keyword>
<keyword id="KW-1185">Reference proteome</keyword>
<keyword id="KW-0677">Repeat</keyword>
<keyword id="KW-0964">Secreted</keyword>
<keyword id="KW-0732">Signal</keyword>
<name>GELS_RAT</name>
<reference key="1">
    <citation type="journal article" date="2004" name="Genome Res.">
        <title>The status, quality, and expansion of the NIH full-length cDNA project: the Mammalian Gene Collection (MGC).</title>
        <authorList>
            <consortium name="The MGC Project Team"/>
        </authorList>
    </citation>
    <scope>NUCLEOTIDE SEQUENCE [LARGE SCALE MRNA] (ISOFORM 1)</scope>
    <source>
        <tissue>Lung</tissue>
    </source>
</reference>
<reference key="2">
    <citation type="submission" date="2007-04" db="UniProtKB">
        <authorList>
            <person name="Lubec G."/>
            <person name="Diao W."/>
        </authorList>
    </citation>
    <scope>PROTEIN SEQUENCE OF 301-325; 396-417; 583-595 AND 614-621</scope>
    <scope>IDENTIFICATION BY MASS SPECTROMETRY</scope>
    <source>
        <strain>Sprague-Dawley</strain>
        <tissue>Hippocampus</tissue>
    </source>
</reference>
<comment type="function">
    <text evidence="2">Calcium-regulated, actin-modulating protein that binds to the plus (or barbed) ends of actin monomers or filaments, preventing monomer exchange (end-blocking or capping). It can promote the assembly of monomers into filaments (nucleation) as well as sever filaments already formed (By similarity). Plays a role in ciliogenesis (By similarity).</text>
</comment>
<comment type="subunit">
    <text evidence="1 3">Binds to actin and to fibronectin. Identified in a complex composed of ACTA1, COBL, GSN and TMSB4X (By similarity). Interacts with the inactive form of EIF2AK2/PKR (By similarity). Interacts with FLII (By similarity).</text>
</comment>
<comment type="subcellular location">
    <molecule>Isoform 1</molecule>
    <subcellularLocation>
        <location evidence="1">Secreted</location>
    </subcellularLocation>
</comment>
<comment type="subcellular location">
    <molecule>Isoform 2</molecule>
    <subcellularLocation>
        <location evidence="1">Cytoplasm</location>
        <location evidence="1">Cytoskeleton</location>
    </subcellularLocation>
    <text evidence="1">A cytoplasmic form may also exist.</text>
</comment>
<comment type="alternative products">
    <event type="alternative initiation"/>
    <isoform>
        <id>Q68FP1-1</id>
        <name>1</name>
        <name>Secreted</name>
        <name>Plasma</name>
        <sequence type="displayed"/>
    </isoform>
    <isoform>
        <id>Q68FP1-2</id>
        <name>2</name>
        <name>Cytoplasmic</name>
        <sequence type="described" ref="VSP_036722"/>
    </isoform>
</comment>
<comment type="domain">
    <text evidence="2">Comprises six structurally related gelsolin-like (G1-G6) domains, that, in a calcium-free environment, are packed together to form a compact globular structure in which the putative actin-binding sequences are not sufficiently exposed to enable binding to occur. Binding calcium may release the connections that join the N- and C-terminal halves of gelsolin, enabling each half to bind actin relatively independently. G1 and G4 bind two Ca(2+) in a type I and in a type II manner. G2, G3, G5 and G6 bind only one Ca(2+) in a type II manner. Type I Ca(2+) binding sites are shared between actin and gelsolin-like repeats G1 and G4. Type I binding governs the strength of interactions between gelsolin and actin by direct participation at the binding interface. Ca(2+) binding to G2 and G6 disrupts the interactions between G2 and G6, releases the C-terminal tail, and induces large interdomain rearrangements that result in the exposure of the F-actin-binding site on G2 and contributes to the activation of gelsolin. Binding to phosphoinositides may inhibit the severing and capping properties of gelsolin.</text>
</comment>
<comment type="PTM">
    <text evidence="1">Phosphorylated on tyrosine residues in vitro.</text>
</comment>
<comment type="similarity">
    <text evidence="6">Belongs to the villin/gelsolin family.</text>
</comment>
<feature type="signal peptide" evidence="4">
    <location>
        <begin position="1"/>
        <end position="25"/>
    </location>
</feature>
<feature type="chain" id="PRO_0000288477" description="Gelsolin">
    <location>
        <begin position="26"/>
        <end position="780"/>
    </location>
</feature>
<feature type="repeat" description="Gelsolin-like 1" evidence="4">
    <location>
        <begin position="74"/>
        <end position="155"/>
    </location>
</feature>
<feature type="repeat" description="Gelsolin-like 2" evidence="4">
    <location>
        <begin position="196"/>
        <end position="268"/>
    </location>
</feature>
<feature type="repeat" description="Gelsolin-like 3" evidence="4">
    <location>
        <begin position="315"/>
        <end position="387"/>
    </location>
</feature>
<feature type="repeat" description="Gelsolin-like 4" evidence="4">
    <location>
        <begin position="453"/>
        <end position="534"/>
    </location>
</feature>
<feature type="repeat" description="Gelsolin-like 5" evidence="4">
    <location>
        <begin position="576"/>
        <end position="640"/>
    </location>
</feature>
<feature type="repeat" description="Gelsolin-like 6" evidence="4">
    <location>
        <begin position="679"/>
        <end position="754"/>
    </location>
</feature>
<feature type="region of interest" description="Disordered" evidence="5">
    <location>
        <begin position="28"/>
        <end position="48"/>
    </location>
</feature>
<feature type="region of interest" description="Actin-severing" evidence="4">
    <location>
        <begin position="51"/>
        <end position="174"/>
    </location>
</feature>
<feature type="region of interest" description="Actin-actin interfilament contact point" evidence="1">
    <location>
        <begin position="121"/>
        <end position="124"/>
    </location>
</feature>
<feature type="region of interest" description="Disordered" evidence="5">
    <location>
        <begin position="244"/>
        <end position="286"/>
    </location>
</feature>
<feature type="region of interest" description="Actin-binding, Ca-sensitive" evidence="4">
    <location>
        <begin position="432"/>
        <end position="780"/>
    </location>
</feature>
<feature type="binding site" evidence="2">
    <location>
        <position position="90"/>
    </location>
    <ligand>
        <name>Ca(2+)</name>
        <dbReference type="ChEBI" id="CHEBI:29108"/>
        <label>1</label>
        <note>type II</note>
    </ligand>
</feature>
<feature type="binding site" evidence="2">
    <location>
        <position position="91"/>
    </location>
    <ligand>
        <name>Ca(2+)</name>
        <dbReference type="ChEBI" id="CHEBI:29108"/>
        <label>1</label>
        <note>type II</note>
    </ligand>
</feature>
<feature type="binding site" evidence="2">
    <location>
        <position position="122"/>
    </location>
    <ligand>
        <name>Ca(2+)</name>
        <dbReference type="ChEBI" id="CHEBI:29108"/>
        <label>1</label>
        <note>type II</note>
    </ligand>
</feature>
<feature type="binding site" evidence="2">
    <location>
        <position position="134"/>
    </location>
    <ligand>
        <name>Ca(2+)</name>
        <dbReference type="ChEBI" id="CHEBI:29108"/>
        <label>2</label>
        <note>type I</note>
    </ligand>
</feature>
<feature type="binding site" evidence="2">
    <location>
        <position position="139"/>
    </location>
    <ligand>
        <name>Ca(2+)</name>
        <dbReference type="ChEBI" id="CHEBI:29108"/>
        <label>2</label>
        <note>type I</note>
    </ligand>
</feature>
<feature type="binding site" evidence="2">
    <location>
        <position position="141"/>
    </location>
    <ligand>
        <name>Ca(2+)</name>
        <dbReference type="ChEBI" id="CHEBI:29108"/>
        <label>2</label>
        <note>type I</note>
    </ligand>
</feature>
<feature type="binding site" evidence="1">
    <location>
        <begin position="160"/>
        <end position="167"/>
    </location>
    <ligand>
        <name>a 1,2-diacyl-sn-glycero-3-phospho-(1D-myo-inositol-4,5-bisphosphate)</name>
        <dbReference type="ChEBI" id="CHEBI:58456"/>
    </ligand>
</feature>
<feature type="binding site" evidence="2">
    <location>
        <position position="170"/>
    </location>
    <ligand>
        <name>Ca(2+)</name>
        <dbReference type="ChEBI" id="CHEBI:29108"/>
        <label>1</label>
        <note>type II</note>
    </ligand>
</feature>
<feature type="binding site" evidence="1">
    <location>
        <begin position="186"/>
        <end position="194"/>
    </location>
    <ligand>
        <name>a 1,2-diacyl-sn-glycero-3-phospho-(1D-myo-inositol-4,5-bisphosphate)</name>
        <dbReference type="ChEBI" id="CHEBI:58456"/>
    </ligand>
</feature>
<feature type="binding site" evidence="2">
    <location>
        <position position="211"/>
    </location>
    <ligand>
        <name>Ca(2+)</name>
        <dbReference type="ChEBI" id="CHEBI:29108"/>
        <label>3</label>
        <note>type II</note>
    </ligand>
</feature>
<feature type="binding site" evidence="2">
    <location>
        <position position="212"/>
    </location>
    <ligand>
        <name>Ca(2+)</name>
        <dbReference type="ChEBI" id="CHEBI:29108"/>
        <label>3</label>
        <note>type II</note>
    </ligand>
</feature>
<feature type="binding site" evidence="2">
    <location>
        <position position="234"/>
    </location>
    <ligand>
        <name>Ca(2+)</name>
        <dbReference type="ChEBI" id="CHEBI:29108"/>
        <label>3</label>
        <note>type II</note>
    </ligand>
</feature>
<feature type="binding site" evidence="2">
    <location>
        <position position="284"/>
    </location>
    <ligand>
        <name>Ca(2+)</name>
        <dbReference type="ChEBI" id="CHEBI:29108"/>
        <label>3</label>
        <note>type II</note>
    </ligand>
</feature>
<feature type="binding site" evidence="2">
    <location>
        <position position="327"/>
    </location>
    <ligand>
        <name>Ca(2+)</name>
        <dbReference type="ChEBI" id="CHEBI:29108"/>
        <label>4</label>
        <note>type II</note>
    </ligand>
</feature>
<feature type="binding site" evidence="2">
    <location>
        <position position="328"/>
    </location>
    <ligand>
        <name>Ca(2+)</name>
        <dbReference type="ChEBI" id="CHEBI:29108"/>
        <label>4</label>
        <note>type II</note>
    </ligand>
</feature>
<feature type="binding site" evidence="2">
    <location>
        <position position="352"/>
    </location>
    <ligand>
        <name>Ca(2+)</name>
        <dbReference type="ChEBI" id="CHEBI:29108"/>
        <label>4</label>
        <note>type II</note>
    </ligand>
</feature>
<feature type="binding site" evidence="2">
    <location>
        <position position="469"/>
    </location>
    <ligand>
        <name>Ca(2+)</name>
        <dbReference type="ChEBI" id="CHEBI:29108"/>
        <label>5</label>
        <note>type II</note>
    </ligand>
</feature>
<feature type="binding site" evidence="2">
    <location>
        <position position="470"/>
    </location>
    <ligand>
        <name>Ca(2+)</name>
        <dbReference type="ChEBI" id="CHEBI:29108"/>
        <label>5</label>
        <note>type II</note>
    </ligand>
</feature>
<feature type="binding site" evidence="2">
    <location>
        <position position="500"/>
    </location>
    <ligand>
        <name>Ca(2+)</name>
        <dbReference type="ChEBI" id="CHEBI:29108"/>
        <label>5</label>
        <note>type II</note>
    </ligand>
</feature>
<feature type="binding site" evidence="2">
    <location>
        <position position="512"/>
    </location>
    <ligand>
        <name>Ca(2+)</name>
        <dbReference type="ChEBI" id="CHEBI:29108"/>
        <label>6</label>
        <note>type I</note>
    </ligand>
</feature>
<feature type="binding site" evidence="2">
    <location>
        <position position="517"/>
    </location>
    <ligand>
        <name>Ca(2+)</name>
        <dbReference type="ChEBI" id="CHEBI:29108"/>
        <label>6</label>
        <note>type I</note>
    </ligand>
</feature>
<feature type="binding site" evidence="2">
    <location>
        <position position="519"/>
    </location>
    <ligand>
        <name>Ca(2+)</name>
        <dbReference type="ChEBI" id="CHEBI:29108"/>
        <label>6</label>
        <note>type I</note>
    </ligand>
</feature>
<feature type="binding site" evidence="2">
    <location>
        <position position="549"/>
    </location>
    <ligand>
        <name>Ca(2+)</name>
        <dbReference type="ChEBI" id="CHEBI:29108"/>
        <label>5</label>
        <note>type II</note>
    </ligand>
</feature>
<feature type="binding site" evidence="2">
    <location>
        <position position="589"/>
    </location>
    <ligand>
        <name>Ca(2+)</name>
        <dbReference type="ChEBI" id="CHEBI:29108"/>
        <label>7</label>
        <note>type II</note>
    </ligand>
</feature>
<feature type="binding site" evidence="2">
    <location>
        <position position="590"/>
    </location>
    <ligand>
        <name>Ca(2+)</name>
        <dbReference type="ChEBI" id="CHEBI:29108"/>
        <label>7</label>
        <note>type II</note>
    </ligand>
</feature>
<feature type="binding site" evidence="2">
    <location>
        <position position="612"/>
    </location>
    <ligand>
        <name>Ca(2+)</name>
        <dbReference type="ChEBI" id="CHEBI:29108"/>
        <label>7</label>
        <note>type II</note>
    </ligand>
</feature>
<feature type="binding site" evidence="2">
    <location>
        <position position="694"/>
    </location>
    <ligand>
        <name>Ca(2+)</name>
        <dbReference type="ChEBI" id="CHEBI:29108"/>
        <label>8</label>
        <note>type II</note>
    </ligand>
</feature>
<feature type="binding site" evidence="2">
    <location>
        <position position="695"/>
    </location>
    <ligand>
        <name>Ca(2+)</name>
        <dbReference type="ChEBI" id="CHEBI:29108"/>
        <label>8</label>
        <note>type II</note>
    </ligand>
</feature>
<feature type="binding site" evidence="2">
    <location>
        <position position="717"/>
    </location>
    <ligand>
        <name>Ca(2+)</name>
        <dbReference type="ChEBI" id="CHEBI:29108"/>
        <label>8</label>
        <note>type II</note>
    </ligand>
</feature>
<feature type="modified residue" description="Phosphotyrosine" evidence="2">
    <location>
        <position position="84"/>
    </location>
</feature>
<feature type="modified residue" description="Phosphotyrosine" evidence="2">
    <location>
        <position position="407"/>
    </location>
</feature>
<feature type="modified residue" description="Phosphotyrosine" evidence="2">
    <location>
        <position position="463"/>
    </location>
</feature>
<feature type="modified residue" description="N6-acetyllysine" evidence="3">
    <location>
        <position position="582"/>
    </location>
</feature>
<feature type="modified residue" description="Phosphotyrosine" evidence="2">
    <location>
        <position position="601"/>
    </location>
</feature>
<feature type="modified residue" description="Phosphotyrosine" evidence="2">
    <location>
        <position position="649"/>
    </location>
</feature>
<feature type="modified residue" description="Phosphothreonine" evidence="2">
    <location>
        <position position="740"/>
    </location>
</feature>
<feature type="disulfide bond" evidence="2">
    <location>
        <begin position="213"/>
        <end position="226"/>
    </location>
</feature>
<feature type="splice variant" id="VSP_036722" description="In isoform 2." evidence="6">
    <location>
        <begin position="1"/>
        <end position="49"/>
    </location>
</feature>
<sequence>MAPYCSSLRSALLVLALCALSPSHAATASRGRAQERAPQSRVSETRPSTMVVEHPEFLKAGKEPGLQIWRVEKFDLVPVPPNLYGDFFTGDAYVILKTVQLRNGNLQYDLHYWLGNECSQDESGAAAIFTVQLDDYLNGRAVQHREVQGFESSTFQGYFKSGLKYKKGGVASGFKHVVPNEVVVQRLFQVKGRRVVRATEVPVSWDSFNNGDCFILDLGNNIYQWCGSGSNKFERLKATQVSKGIRDNERSGRAQVHVSEEGSEPEAMLQVLGPKPDLPQGTEDTAKEDAANRRLAKLYKVSNSGGSMSVSLVADENPFAQSALRSEDCFILDHGRDGKIFVWKGKQANMDERKAALKTASDFISKMQYPRQTQVSVLPEGGETPLFKQFFKNWRDPDQTDGPGLSYLSSHIANVERVPFDAATLHTSTAMAAQHGMDDDGTGQKQIWRIEGSNKVLVDPATYGQFYGGDSYIILYNYRHGGRQGQIIYNWQGAQSTQDEVAASAILTAQLDEELGGTPVQSRVVQGKEPAHLMSLFGGKPMIIYKGGTSRDGGQTTPASTRLFQVRASSSGATRAVEVMPKAGALNSNDAFVLKTPSAAYLWVGTGASDAEKTGALELLKVLRAQHVQVEEGSEPDGFWEALGGKTAYRTSPRLKDKKMDAHPPRLFACSNRIGRFVIEEVPGELMQEDLATDDVMLLDTWDQVFVWVGKDSQEEEKTEALTSAKRYIETDPANRDRRTPITVVRQGFEPPSFVGWFLGWDDDYWSVDPLDRALAELAA</sequence>
<gene>
    <name type="primary">Gsn</name>
</gene>
<accession>Q68FP1</accession>
<organism>
    <name type="scientific">Rattus norvegicus</name>
    <name type="common">Rat</name>
    <dbReference type="NCBI Taxonomy" id="10116"/>
    <lineage>
        <taxon>Eukaryota</taxon>
        <taxon>Metazoa</taxon>
        <taxon>Chordata</taxon>
        <taxon>Craniata</taxon>
        <taxon>Vertebrata</taxon>
        <taxon>Euteleostomi</taxon>
        <taxon>Mammalia</taxon>
        <taxon>Eutheria</taxon>
        <taxon>Euarchontoglires</taxon>
        <taxon>Glires</taxon>
        <taxon>Rodentia</taxon>
        <taxon>Myomorpha</taxon>
        <taxon>Muroidea</taxon>
        <taxon>Muridae</taxon>
        <taxon>Murinae</taxon>
        <taxon>Rattus</taxon>
    </lineage>
</organism>
<proteinExistence type="evidence at protein level"/>
<dbReference type="EMBL" id="BC079472">
    <property type="protein sequence ID" value="AAH79472.1"/>
    <property type="molecule type" value="mRNA"/>
</dbReference>
<dbReference type="RefSeq" id="NP_001004080.1">
    <molecule id="Q68FP1-1"/>
    <property type="nucleotide sequence ID" value="NM_001004080.1"/>
</dbReference>
<dbReference type="RefSeq" id="XP_006234102.1">
    <molecule id="Q68FP1-2"/>
    <property type="nucleotide sequence ID" value="XM_006234040.4"/>
</dbReference>
<dbReference type="RefSeq" id="XP_038960712.1">
    <molecule id="Q68FP1-2"/>
    <property type="nucleotide sequence ID" value="XM_039104784.2"/>
</dbReference>
<dbReference type="SMR" id="Q68FP1"/>
<dbReference type="BioGRID" id="255439">
    <property type="interactions" value="6"/>
</dbReference>
<dbReference type="CORUM" id="Q68FP1"/>
<dbReference type="FunCoup" id="Q68FP1">
    <property type="interactions" value="463"/>
</dbReference>
<dbReference type="IntAct" id="Q68FP1">
    <property type="interactions" value="7"/>
</dbReference>
<dbReference type="MINT" id="Q68FP1"/>
<dbReference type="STRING" id="10116.ENSRNOP00000025857"/>
<dbReference type="iPTMnet" id="Q68FP1"/>
<dbReference type="PhosphoSitePlus" id="Q68FP1"/>
<dbReference type="jPOST" id="Q68FP1"/>
<dbReference type="PaxDb" id="10116-ENSRNOP00000025857"/>
<dbReference type="PeptideAtlas" id="Q68FP1"/>
<dbReference type="Ensembl" id="ENSRNOT00000025857.6">
    <molecule id="Q68FP1-1"/>
    <property type="protein sequence ID" value="ENSRNOP00000025857.5"/>
    <property type="gene ID" value="ENSRNOG00000018991.7"/>
</dbReference>
<dbReference type="GeneID" id="296654"/>
<dbReference type="KEGG" id="rno:296654"/>
<dbReference type="UCSC" id="RGD:1303089">
    <molecule id="Q68FP1-1"/>
    <property type="organism name" value="rat"/>
</dbReference>
<dbReference type="AGR" id="RGD:1303089"/>
<dbReference type="CTD" id="2934"/>
<dbReference type="RGD" id="1303089">
    <property type="gene designation" value="Gsn"/>
</dbReference>
<dbReference type="eggNOG" id="KOG0443">
    <property type="taxonomic scope" value="Eukaryota"/>
</dbReference>
<dbReference type="GeneTree" id="ENSGT00940000155591"/>
<dbReference type="InParanoid" id="Q68FP1"/>
<dbReference type="OrthoDB" id="9931at9989"/>
<dbReference type="PhylomeDB" id="Q68FP1"/>
<dbReference type="Reactome" id="R-RNO-264870">
    <property type="pathway name" value="Caspase-mediated cleavage of cytoskeletal proteins"/>
</dbReference>
<dbReference type="Reactome" id="R-RNO-6798695">
    <property type="pathway name" value="Neutrophil degranulation"/>
</dbReference>
<dbReference type="PRO" id="PR:Q68FP1"/>
<dbReference type="Proteomes" id="UP000002494">
    <property type="component" value="Chromosome 3"/>
</dbReference>
<dbReference type="Bgee" id="ENSRNOG00000018991">
    <property type="expression patterns" value="Expressed in lung and 20 other cell types or tissues"/>
</dbReference>
<dbReference type="GO" id="GO:0030478">
    <property type="term" value="C:actin cap"/>
    <property type="evidence" value="ECO:0000266"/>
    <property type="project" value="RGD"/>
</dbReference>
<dbReference type="GO" id="GO:0015629">
    <property type="term" value="C:actin cytoskeleton"/>
    <property type="evidence" value="ECO:0000314"/>
    <property type="project" value="RGD"/>
</dbReference>
<dbReference type="GO" id="GO:0061831">
    <property type="term" value="C:apical ectoplasmic specialization"/>
    <property type="evidence" value="ECO:0000314"/>
    <property type="project" value="RGD"/>
</dbReference>
<dbReference type="GO" id="GO:0061832">
    <property type="term" value="C:basal ectoplasmic specialization"/>
    <property type="evidence" value="ECO:0000314"/>
    <property type="project" value="RGD"/>
</dbReference>
<dbReference type="GO" id="GO:0030864">
    <property type="term" value="C:cortical actin cytoskeleton"/>
    <property type="evidence" value="ECO:0000266"/>
    <property type="project" value="RGD"/>
</dbReference>
<dbReference type="GO" id="GO:0005737">
    <property type="term" value="C:cytoplasm"/>
    <property type="evidence" value="ECO:0000266"/>
    <property type="project" value="RGD"/>
</dbReference>
<dbReference type="GO" id="GO:0005829">
    <property type="term" value="C:cytosol"/>
    <property type="evidence" value="ECO:0000250"/>
    <property type="project" value="UniProtKB"/>
</dbReference>
<dbReference type="GO" id="GO:0005576">
    <property type="term" value="C:extracellular region"/>
    <property type="evidence" value="ECO:0000250"/>
    <property type="project" value="UniProtKB"/>
</dbReference>
<dbReference type="GO" id="GO:0005615">
    <property type="term" value="C:extracellular space"/>
    <property type="evidence" value="ECO:0000314"/>
    <property type="project" value="RGD"/>
</dbReference>
<dbReference type="GO" id="GO:0005925">
    <property type="term" value="C:focal adhesion"/>
    <property type="evidence" value="ECO:0000266"/>
    <property type="project" value="RGD"/>
</dbReference>
<dbReference type="GO" id="GO:0097426">
    <property type="term" value="C:glial filament"/>
    <property type="evidence" value="ECO:0000314"/>
    <property type="project" value="RGD"/>
</dbReference>
<dbReference type="GO" id="GO:0030027">
    <property type="term" value="C:lamellipodium"/>
    <property type="evidence" value="ECO:0000266"/>
    <property type="project" value="RGD"/>
</dbReference>
<dbReference type="GO" id="GO:0043209">
    <property type="term" value="C:myelin sheath"/>
    <property type="evidence" value="ECO:0000314"/>
    <property type="project" value="UniProtKB"/>
</dbReference>
<dbReference type="GO" id="GO:0005634">
    <property type="term" value="C:nucleus"/>
    <property type="evidence" value="ECO:0000266"/>
    <property type="project" value="RGD"/>
</dbReference>
<dbReference type="GO" id="GO:0048471">
    <property type="term" value="C:perinuclear region of cytoplasm"/>
    <property type="evidence" value="ECO:0000314"/>
    <property type="project" value="RGD"/>
</dbReference>
<dbReference type="GO" id="GO:0045335">
    <property type="term" value="C:phagocytic vesicle"/>
    <property type="evidence" value="ECO:0000266"/>
    <property type="project" value="RGD"/>
</dbReference>
<dbReference type="GO" id="GO:0005886">
    <property type="term" value="C:plasma membrane"/>
    <property type="evidence" value="ECO:0000266"/>
    <property type="project" value="RGD"/>
</dbReference>
<dbReference type="GO" id="GO:0002102">
    <property type="term" value="C:podosome"/>
    <property type="evidence" value="ECO:0000266"/>
    <property type="project" value="RGD"/>
</dbReference>
<dbReference type="GO" id="GO:0032991">
    <property type="term" value="C:protein-containing complex"/>
    <property type="evidence" value="ECO:0000314"/>
    <property type="project" value="RGD"/>
</dbReference>
<dbReference type="GO" id="GO:0001726">
    <property type="term" value="C:ruffle"/>
    <property type="evidence" value="ECO:0000314"/>
    <property type="project" value="RGD"/>
</dbReference>
<dbReference type="GO" id="GO:0016528">
    <property type="term" value="C:sarcoplasm"/>
    <property type="evidence" value="ECO:0000266"/>
    <property type="project" value="RGD"/>
</dbReference>
<dbReference type="GO" id="GO:0003779">
    <property type="term" value="F:actin binding"/>
    <property type="evidence" value="ECO:0000314"/>
    <property type="project" value="RGD"/>
</dbReference>
<dbReference type="GO" id="GO:0051015">
    <property type="term" value="F:actin filament binding"/>
    <property type="evidence" value="ECO:0000318"/>
    <property type="project" value="GO_Central"/>
</dbReference>
<dbReference type="GO" id="GO:0005509">
    <property type="term" value="F:calcium ion binding"/>
    <property type="evidence" value="ECO:0000266"/>
    <property type="project" value="RGD"/>
</dbReference>
<dbReference type="GO" id="GO:0045159">
    <property type="term" value="F:myosin II binding"/>
    <property type="evidence" value="ECO:0000266"/>
    <property type="project" value="RGD"/>
</dbReference>
<dbReference type="GO" id="GO:0036313">
    <property type="term" value="F:phosphatidylinositol 3-kinase catalytic subunit binding"/>
    <property type="evidence" value="ECO:0000266"/>
    <property type="project" value="RGD"/>
</dbReference>
<dbReference type="GO" id="GO:0005546">
    <property type="term" value="F:phosphatidylinositol-4,5-bisphosphate binding"/>
    <property type="evidence" value="ECO:0000318"/>
    <property type="project" value="GO_Central"/>
</dbReference>
<dbReference type="GO" id="GO:0030036">
    <property type="term" value="P:actin cytoskeleton organization"/>
    <property type="evidence" value="ECO:0000266"/>
    <property type="project" value="RGD"/>
</dbReference>
<dbReference type="GO" id="GO:0051693">
    <property type="term" value="P:actin filament capping"/>
    <property type="evidence" value="ECO:0000266"/>
    <property type="project" value="RGD"/>
</dbReference>
<dbReference type="GO" id="GO:0030042">
    <property type="term" value="P:actin filament depolymerization"/>
    <property type="evidence" value="ECO:0000315"/>
    <property type="project" value="RGD"/>
</dbReference>
<dbReference type="GO" id="GO:0007015">
    <property type="term" value="P:actin filament organization"/>
    <property type="evidence" value="ECO:0000266"/>
    <property type="project" value="RGD"/>
</dbReference>
<dbReference type="GO" id="GO:0030041">
    <property type="term" value="P:actin filament polymerization"/>
    <property type="evidence" value="ECO:0000250"/>
    <property type="project" value="UniProtKB"/>
</dbReference>
<dbReference type="GO" id="GO:0051014">
    <property type="term" value="P:actin filament severing"/>
    <property type="evidence" value="ECO:0000250"/>
    <property type="project" value="UniProtKB"/>
</dbReference>
<dbReference type="GO" id="GO:0008154">
    <property type="term" value="P:actin polymerization or depolymerization"/>
    <property type="evidence" value="ECO:0000314"/>
    <property type="project" value="RGD"/>
</dbReference>
<dbReference type="GO" id="GO:1990000">
    <property type="term" value="P:amyloid fibril formation"/>
    <property type="evidence" value="ECO:0000266"/>
    <property type="project" value="RGD"/>
</dbReference>
<dbReference type="GO" id="GO:0051016">
    <property type="term" value="P:barbed-end actin filament capping"/>
    <property type="evidence" value="ECO:0000318"/>
    <property type="project" value="GO_Central"/>
</dbReference>
<dbReference type="GO" id="GO:0086003">
    <property type="term" value="P:cardiac muscle cell contraction"/>
    <property type="evidence" value="ECO:0000266"/>
    <property type="project" value="RGD"/>
</dbReference>
<dbReference type="GO" id="GO:0030031">
    <property type="term" value="P:cell projection assembly"/>
    <property type="evidence" value="ECO:0000318"/>
    <property type="project" value="GO_Central"/>
</dbReference>
<dbReference type="GO" id="GO:0071276">
    <property type="term" value="P:cellular response to cadmium ion"/>
    <property type="evidence" value="ECO:0000314"/>
    <property type="project" value="RGD"/>
</dbReference>
<dbReference type="GO" id="GO:0071346">
    <property type="term" value="P:cellular response to type II interferon"/>
    <property type="evidence" value="ECO:0000266"/>
    <property type="project" value="RGD"/>
</dbReference>
<dbReference type="GO" id="GO:0007417">
    <property type="term" value="P:central nervous system development"/>
    <property type="evidence" value="ECO:0000318"/>
    <property type="project" value="GO_Central"/>
</dbReference>
<dbReference type="GO" id="GO:0060271">
    <property type="term" value="P:cilium assembly"/>
    <property type="evidence" value="ECO:0000250"/>
    <property type="project" value="UniProtKB"/>
</dbReference>
<dbReference type="GO" id="GO:0097284">
    <property type="term" value="P:hepatocyte apoptotic process"/>
    <property type="evidence" value="ECO:0000266"/>
    <property type="project" value="RGD"/>
</dbReference>
<dbReference type="GO" id="GO:0014003">
    <property type="term" value="P:oligodendrocyte development"/>
    <property type="evidence" value="ECO:0000270"/>
    <property type="project" value="RGD"/>
</dbReference>
<dbReference type="GO" id="GO:0006911">
    <property type="term" value="P:phagocytosis, engulfment"/>
    <property type="evidence" value="ECO:0000266"/>
    <property type="project" value="RGD"/>
</dbReference>
<dbReference type="GO" id="GO:0051127">
    <property type="term" value="P:positive regulation of actin nucleation"/>
    <property type="evidence" value="ECO:0000266"/>
    <property type="project" value="RGD"/>
</dbReference>
<dbReference type="GO" id="GO:0010613">
    <property type="term" value="P:positive regulation of cardiac muscle hypertrophy"/>
    <property type="evidence" value="ECO:0000315"/>
    <property type="project" value="RGD"/>
</dbReference>
<dbReference type="GO" id="GO:0010628">
    <property type="term" value="P:positive regulation of gene expression"/>
    <property type="evidence" value="ECO:0000266"/>
    <property type="project" value="RGD"/>
</dbReference>
<dbReference type="GO" id="GO:1902174">
    <property type="term" value="P:positive regulation of keratinocyte apoptotic process"/>
    <property type="evidence" value="ECO:0000266"/>
    <property type="project" value="RGD"/>
</dbReference>
<dbReference type="GO" id="GO:1900745">
    <property type="term" value="P:positive regulation of p38MAPK cascade"/>
    <property type="evidence" value="ECO:0000315"/>
    <property type="project" value="RGD"/>
</dbReference>
<dbReference type="GO" id="GO:1903923">
    <property type="term" value="P:positive regulation of protein processing in phagocytic vesicle"/>
    <property type="evidence" value="ECO:0000266"/>
    <property type="project" value="RGD"/>
</dbReference>
<dbReference type="GO" id="GO:0031648">
    <property type="term" value="P:protein destabilization"/>
    <property type="evidence" value="ECO:0000266"/>
    <property type="project" value="RGD"/>
</dbReference>
<dbReference type="GO" id="GO:1903903">
    <property type="term" value="P:regulation of establishment of T cell polarity"/>
    <property type="evidence" value="ECO:0000266"/>
    <property type="project" value="RGD"/>
</dbReference>
<dbReference type="GO" id="GO:1903906">
    <property type="term" value="P:regulation of plasma membrane raft polarization"/>
    <property type="evidence" value="ECO:0000266"/>
    <property type="project" value="RGD"/>
</dbReference>
<dbReference type="GO" id="GO:0071801">
    <property type="term" value="P:regulation of podosome assembly"/>
    <property type="evidence" value="ECO:0000266"/>
    <property type="project" value="RGD"/>
</dbReference>
<dbReference type="GO" id="GO:1903909">
    <property type="term" value="P:regulation of receptor clustering"/>
    <property type="evidence" value="ECO:0000266"/>
    <property type="project" value="RGD"/>
</dbReference>
<dbReference type="GO" id="GO:0055119">
    <property type="term" value="P:relaxation of cardiac muscle"/>
    <property type="evidence" value="ECO:0000266"/>
    <property type="project" value="RGD"/>
</dbReference>
<dbReference type="GO" id="GO:0097017">
    <property type="term" value="P:renal protein absorption"/>
    <property type="evidence" value="ECO:0000266"/>
    <property type="project" value="RGD"/>
</dbReference>
<dbReference type="GO" id="GO:0045471">
    <property type="term" value="P:response to ethanol"/>
    <property type="evidence" value="ECO:0000270"/>
    <property type="project" value="RGD"/>
</dbReference>
<dbReference type="GO" id="GO:0051593">
    <property type="term" value="P:response to folic acid"/>
    <property type="evidence" value="ECO:0000270"/>
    <property type="project" value="RGD"/>
</dbReference>
<dbReference type="GO" id="GO:0035994">
    <property type="term" value="P:response to muscle stretch"/>
    <property type="evidence" value="ECO:0000266"/>
    <property type="project" value="RGD"/>
</dbReference>
<dbReference type="GO" id="GO:0014891">
    <property type="term" value="P:striated muscle atrophy"/>
    <property type="evidence" value="ECO:0000266"/>
    <property type="project" value="RGD"/>
</dbReference>
<dbReference type="GO" id="GO:0042246">
    <property type="term" value="P:tissue regeneration"/>
    <property type="evidence" value="ECO:0000270"/>
    <property type="project" value="RGD"/>
</dbReference>
<dbReference type="GO" id="GO:0016192">
    <property type="term" value="P:vesicle-mediated transport"/>
    <property type="evidence" value="ECO:0000266"/>
    <property type="project" value="RGD"/>
</dbReference>
<dbReference type="CDD" id="cd11290">
    <property type="entry name" value="gelsolin_S1_like"/>
    <property type="match status" value="1"/>
</dbReference>
<dbReference type="CDD" id="cd11289">
    <property type="entry name" value="gelsolin_S2_like"/>
    <property type="match status" value="1"/>
</dbReference>
<dbReference type="CDD" id="cd11292">
    <property type="entry name" value="gelsolin_S3_like"/>
    <property type="match status" value="1"/>
</dbReference>
<dbReference type="CDD" id="cd11293">
    <property type="entry name" value="gelsolin_S4_like"/>
    <property type="match status" value="1"/>
</dbReference>
<dbReference type="CDD" id="cd11288">
    <property type="entry name" value="gelsolin_S5_like"/>
    <property type="match status" value="1"/>
</dbReference>
<dbReference type="CDD" id="cd11291">
    <property type="entry name" value="gelsolin_S6_like"/>
    <property type="match status" value="1"/>
</dbReference>
<dbReference type="FunFam" id="3.40.20.10:FF:000001">
    <property type="entry name" value="Gelsolin"/>
    <property type="match status" value="1"/>
</dbReference>
<dbReference type="FunFam" id="3.40.20.10:FF:000002">
    <property type="entry name" value="Gelsolin"/>
    <property type="match status" value="1"/>
</dbReference>
<dbReference type="FunFam" id="3.40.20.10:FF:000004">
    <property type="entry name" value="Gelsolin"/>
    <property type="match status" value="1"/>
</dbReference>
<dbReference type="FunFam" id="3.40.20.10:FF:000005">
    <property type="entry name" value="Gelsolin"/>
    <property type="match status" value="1"/>
</dbReference>
<dbReference type="FunFam" id="3.40.20.10:FF:000009">
    <property type="entry name" value="gelsolin isoform X1"/>
    <property type="match status" value="1"/>
</dbReference>
<dbReference type="FunFam" id="3.40.20.10:FF:000008">
    <property type="entry name" value="gelsolin isoform X2"/>
    <property type="match status" value="1"/>
</dbReference>
<dbReference type="Gene3D" id="3.40.20.10">
    <property type="entry name" value="Severin"/>
    <property type="match status" value="6"/>
</dbReference>
<dbReference type="InterPro" id="IPR029006">
    <property type="entry name" value="ADF-H/Gelsolin-like_dom_sf"/>
</dbReference>
<dbReference type="InterPro" id="IPR007123">
    <property type="entry name" value="Gelsolin-like_dom"/>
</dbReference>
<dbReference type="InterPro" id="IPR007122">
    <property type="entry name" value="Villin/Gelsolin"/>
</dbReference>
<dbReference type="PANTHER" id="PTHR11977:SF29">
    <property type="entry name" value="GELSOLIN"/>
    <property type="match status" value="1"/>
</dbReference>
<dbReference type="PANTHER" id="PTHR11977">
    <property type="entry name" value="VILLIN"/>
    <property type="match status" value="1"/>
</dbReference>
<dbReference type="Pfam" id="PF00626">
    <property type="entry name" value="Gelsolin"/>
    <property type="match status" value="6"/>
</dbReference>
<dbReference type="PRINTS" id="PR00597">
    <property type="entry name" value="GELSOLIN"/>
</dbReference>
<dbReference type="SMART" id="SM00262">
    <property type="entry name" value="GEL"/>
    <property type="match status" value="6"/>
</dbReference>
<dbReference type="SUPFAM" id="SSF55753">
    <property type="entry name" value="Actin depolymerizing proteins"/>
    <property type="match status" value="6"/>
</dbReference>
<protein>
    <recommendedName>
        <fullName>Gelsolin</fullName>
    </recommendedName>
    <alternativeName>
        <fullName>Actin-depolymerizing factor</fullName>
        <shortName>ADF</shortName>
    </alternativeName>
    <alternativeName>
        <fullName>Brevin</fullName>
    </alternativeName>
</protein>
<evidence type="ECO:0000250" key="1"/>
<evidence type="ECO:0000250" key="2">
    <source>
        <dbReference type="UniProtKB" id="P06396"/>
    </source>
</evidence>
<evidence type="ECO:0000250" key="3">
    <source>
        <dbReference type="UniProtKB" id="P13020"/>
    </source>
</evidence>
<evidence type="ECO:0000255" key="4"/>
<evidence type="ECO:0000256" key="5">
    <source>
        <dbReference type="SAM" id="MobiDB-lite"/>
    </source>
</evidence>
<evidence type="ECO:0000305" key="6"/>